<reference key="1">
    <citation type="journal article" date="2000" name="Nature">
        <title>Complete genome sequence of Pseudomonas aeruginosa PAO1, an opportunistic pathogen.</title>
        <authorList>
            <person name="Stover C.K."/>
            <person name="Pham X.-Q.T."/>
            <person name="Erwin A.L."/>
            <person name="Mizoguchi S.D."/>
            <person name="Warrener P."/>
            <person name="Hickey M.J."/>
            <person name="Brinkman F.S.L."/>
            <person name="Hufnagle W.O."/>
            <person name="Kowalik D.J."/>
            <person name="Lagrou M."/>
            <person name="Garber R.L."/>
            <person name="Goltry L."/>
            <person name="Tolentino E."/>
            <person name="Westbrock-Wadman S."/>
            <person name="Yuan Y."/>
            <person name="Brody L.L."/>
            <person name="Coulter S.N."/>
            <person name="Folger K.R."/>
            <person name="Kas A."/>
            <person name="Larbig K."/>
            <person name="Lim R.M."/>
            <person name="Smith K.A."/>
            <person name="Spencer D.H."/>
            <person name="Wong G.K.-S."/>
            <person name="Wu Z."/>
            <person name="Paulsen I.T."/>
            <person name="Reizer J."/>
            <person name="Saier M.H. Jr."/>
            <person name="Hancock R.E.W."/>
            <person name="Lory S."/>
            <person name="Olson M.V."/>
        </authorList>
    </citation>
    <scope>NUCLEOTIDE SEQUENCE [LARGE SCALE GENOMIC DNA]</scope>
    <source>
        <strain>ATCC 15692 / DSM 22644 / CIP 104116 / JCM 14847 / LMG 12228 / 1C / PRS 101 / PAO1</strain>
    </source>
</reference>
<reference key="2">
    <citation type="journal article" date="1995" name="Infect. Immun.">
        <title>Characterization of Pseudomonas aeruginosa fliO, a gene involved in flagellar biosynthesis and adherence.</title>
        <authorList>
            <person name="Simpson D.A."/>
            <person name="Ramphal R."/>
            <person name="Lory S."/>
        </authorList>
    </citation>
    <scope>NUCLEOTIDE SEQUENCE [GENOMIC DNA] OF 259-323</scope>
    <source>
        <strain>PAK</strain>
    </source>
</reference>
<evidence type="ECO:0000250" key="1"/>
<evidence type="ECO:0000305" key="2"/>
<sequence length="323" mass="36282">MAVQDLLSQDEIDALLHGVDDGLVETEVEATPGSVKSYDLTSQDRIVRGRMPTLEMINERFARYTRISMFNLLRRSADVAVGGVQVMKFGEYVHSLYVPTSLNLVKMKPLRGTALFILDAKLVFKLVDNFFGGDGRHAKIEGREFTPTELRVVRMVLEQAFVDLKEAWQAVLEMNFEYVNSEVNPAMANIVSPSEVVVVSTFHIELDGGGGDLHITMPYSMIEPIREMLDAGFQSDHDDQDERWIKALREDVLDVQVPLGATVVRRQLKLRDILHMQPGDVIPVEMPEHMVMRANGVPAFKVKLGAHKGNLALQILEAVERSR</sequence>
<keyword id="KW-0975">Bacterial flagellum</keyword>
<keyword id="KW-0997">Cell inner membrane</keyword>
<keyword id="KW-1003">Cell membrane</keyword>
<keyword id="KW-0145">Chemotaxis</keyword>
<keyword id="KW-0283">Flagellar rotation</keyword>
<keyword id="KW-0472">Membrane</keyword>
<keyword id="KW-1185">Reference proteome</keyword>
<accession>Q51465</accession>
<name>FLIM_PSEAE</name>
<proteinExistence type="inferred from homology"/>
<comment type="function">
    <text evidence="1">FliM is one of three proteins (FliG, FliN, FliM) that forms the rotor-mounted switch complex (C ring), located at the base of the basal body. This complex interacts with the CheY and CheZ chemotaxis proteins, in addition to contacting components of the motor that determine the direction of flagellar rotation (By similarity).</text>
</comment>
<comment type="subcellular location">
    <subcellularLocation>
        <location evidence="1">Cell inner membrane</location>
        <topology evidence="1">Peripheral membrane protein</topology>
    </subcellularLocation>
    <subcellularLocation>
        <location evidence="1">Bacterial flagellum basal body</location>
    </subcellularLocation>
</comment>
<comment type="similarity">
    <text evidence="2">Belongs to the FliM family.</text>
</comment>
<protein>
    <recommendedName>
        <fullName>Flagellar motor switch protein FliM</fullName>
    </recommendedName>
</protein>
<feature type="chain" id="PRO_0000180931" description="Flagellar motor switch protein FliM">
    <location>
        <begin position="1"/>
        <end position="323"/>
    </location>
</feature>
<dbReference type="EMBL" id="AE004091">
    <property type="protein sequence ID" value="AAG04832.1"/>
    <property type="molecule type" value="Genomic_DNA"/>
</dbReference>
<dbReference type="EMBL" id="L39832">
    <property type="protein sequence ID" value="AAA79753.1"/>
    <property type="molecule type" value="Genomic_DNA"/>
</dbReference>
<dbReference type="PIR" id="E83464">
    <property type="entry name" value="E83464"/>
</dbReference>
<dbReference type="RefSeq" id="NP_250134.1">
    <property type="nucleotide sequence ID" value="NC_002516.2"/>
</dbReference>
<dbReference type="RefSeq" id="WP_003083045.1">
    <property type="nucleotide sequence ID" value="NZ_QZGE01000005.1"/>
</dbReference>
<dbReference type="SMR" id="Q51465"/>
<dbReference type="FunCoup" id="Q51465">
    <property type="interactions" value="102"/>
</dbReference>
<dbReference type="STRING" id="208964.PA1443"/>
<dbReference type="PaxDb" id="208964-PA1443"/>
<dbReference type="GeneID" id="881860"/>
<dbReference type="KEGG" id="pae:PA1443"/>
<dbReference type="PATRIC" id="fig|208964.12.peg.1494"/>
<dbReference type="PseudoCAP" id="PA1443"/>
<dbReference type="HOGENOM" id="CLU_052646_1_2_6"/>
<dbReference type="InParanoid" id="Q51465"/>
<dbReference type="OrthoDB" id="9806941at2"/>
<dbReference type="PhylomeDB" id="Q51465"/>
<dbReference type="BioCyc" id="PAER208964:G1FZ6-1469-MONOMER"/>
<dbReference type="Proteomes" id="UP000002438">
    <property type="component" value="Chromosome"/>
</dbReference>
<dbReference type="GO" id="GO:0009425">
    <property type="term" value="C:bacterial-type flagellum basal body"/>
    <property type="evidence" value="ECO:0007669"/>
    <property type="project" value="UniProtKB-SubCell"/>
</dbReference>
<dbReference type="GO" id="GO:0005886">
    <property type="term" value="C:plasma membrane"/>
    <property type="evidence" value="ECO:0007669"/>
    <property type="project" value="UniProtKB-SubCell"/>
</dbReference>
<dbReference type="GO" id="GO:0003774">
    <property type="term" value="F:cytoskeletal motor activity"/>
    <property type="evidence" value="ECO:0007669"/>
    <property type="project" value="InterPro"/>
</dbReference>
<dbReference type="GO" id="GO:0071978">
    <property type="term" value="P:bacterial-type flagellum-dependent swarming motility"/>
    <property type="evidence" value="ECO:0000318"/>
    <property type="project" value="GO_Central"/>
</dbReference>
<dbReference type="GO" id="GO:0050918">
    <property type="term" value="P:positive chemotaxis"/>
    <property type="evidence" value="ECO:0000318"/>
    <property type="project" value="GO_Central"/>
</dbReference>
<dbReference type="CDD" id="cd17908">
    <property type="entry name" value="FliM"/>
    <property type="match status" value="1"/>
</dbReference>
<dbReference type="FunFam" id="3.40.1550.10:FF:000001">
    <property type="entry name" value="Flagellar motor switch protein FliM"/>
    <property type="match status" value="1"/>
</dbReference>
<dbReference type="Gene3D" id="3.40.1550.10">
    <property type="entry name" value="CheC-like"/>
    <property type="match status" value="1"/>
</dbReference>
<dbReference type="Gene3D" id="2.30.330.10">
    <property type="entry name" value="SpoA-like"/>
    <property type="match status" value="1"/>
</dbReference>
<dbReference type="InterPro" id="IPR028976">
    <property type="entry name" value="CheC-like_sf"/>
</dbReference>
<dbReference type="InterPro" id="IPR001689">
    <property type="entry name" value="Flag_FliM"/>
</dbReference>
<dbReference type="InterPro" id="IPR001543">
    <property type="entry name" value="FliN-like_C"/>
</dbReference>
<dbReference type="InterPro" id="IPR036429">
    <property type="entry name" value="SpoA-like_sf"/>
</dbReference>
<dbReference type="NCBIfam" id="TIGR01397">
    <property type="entry name" value="fliM_switch"/>
    <property type="match status" value="1"/>
</dbReference>
<dbReference type="PANTHER" id="PTHR30034">
    <property type="entry name" value="FLAGELLAR MOTOR SWITCH PROTEIN FLIM"/>
    <property type="match status" value="1"/>
</dbReference>
<dbReference type="PANTHER" id="PTHR30034:SF3">
    <property type="entry name" value="FLAGELLAR MOTOR SWITCH PROTEIN FLIM"/>
    <property type="match status" value="1"/>
</dbReference>
<dbReference type="Pfam" id="PF02154">
    <property type="entry name" value="FliM"/>
    <property type="match status" value="1"/>
</dbReference>
<dbReference type="Pfam" id="PF01052">
    <property type="entry name" value="FliMN_C"/>
    <property type="match status" value="1"/>
</dbReference>
<dbReference type="PIRSF" id="PIRSF002888">
    <property type="entry name" value="FliM"/>
    <property type="match status" value="1"/>
</dbReference>
<dbReference type="PRINTS" id="PR00955">
    <property type="entry name" value="FLGMOTORFLIM"/>
</dbReference>
<dbReference type="SUPFAM" id="SSF103039">
    <property type="entry name" value="CheC-like"/>
    <property type="match status" value="1"/>
</dbReference>
<dbReference type="SUPFAM" id="SSF101801">
    <property type="entry name" value="Surface presentation of antigens (SPOA)"/>
    <property type="match status" value="1"/>
</dbReference>
<gene>
    <name type="primary">fliM</name>
    <name type="ordered locus">PA1443</name>
</gene>
<organism>
    <name type="scientific">Pseudomonas aeruginosa (strain ATCC 15692 / DSM 22644 / CIP 104116 / JCM 14847 / LMG 12228 / 1C / PRS 101 / PAO1)</name>
    <dbReference type="NCBI Taxonomy" id="208964"/>
    <lineage>
        <taxon>Bacteria</taxon>
        <taxon>Pseudomonadati</taxon>
        <taxon>Pseudomonadota</taxon>
        <taxon>Gammaproteobacteria</taxon>
        <taxon>Pseudomonadales</taxon>
        <taxon>Pseudomonadaceae</taxon>
        <taxon>Pseudomonas</taxon>
    </lineage>
</organism>